<comment type="function">
    <text evidence="1">Repressor involved in the biosynthesis of the osmoprotectant glycine betaine. It represses transcription of the choline transporter BetT and the genes of BetAB involved in the synthesis of glycine betaine (By similarity).</text>
</comment>
<comment type="pathway">
    <text>Amine and polyamine biosynthesis; betaine biosynthesis via choline pathway [regulation].</text>
</comment>
<name>BETI_PSEP7</name>
<organism>
    <name type="scientific">Pseudomonas paraeruginosa (strain DSM 24068 / PA7)</name>
    <name type="common">Pseudomonas aeruginosa (strain PA7)</name>
    <dbReference type="NCBI Taxonomy" id="381754"/>
    <lineage>
        <taxon>Bacteria</taxon>
        <taxon>Pseudomonadati</taxon>
        <taxon>Pseudomonadota</taxon>
        <taxon>Gammaproteobacteria</taxon>
        <taxon>Pseudomonadales</taxon>
        <taxon>Pseudomonadaceae</taxon>
        <taxon>Pseudomonas</taxon>
        <taxon>Pseudomonas paraeruginosa</taxon>
    </lineage>
</organism>
<reference key="1">
    <citation type="submission" date="2007-06" db="EMBL/GenBank/DDBJ databases">
        <authorList>
            <person name="Dodson R.J."/>
            <person name="Harkins D."/>
            <person name="Paulsen I.T."/>
        </authorList>
    </citation>
    <scope>NUCLEOTIDE SEQUENCE [LARGE SCALE GENOMIC DNA]</scope>
    <source>
        <strain>DSM 24068 / PA7</strain>
    </source>
</reference>
<dbReference type="EMBL" id="CP000744">
    <property type="protein sequence ID" value="ABR82195.1"/>
    <property type="molecule type" value="Genomic_DNA"/>
</dbReference>
<dbReference type="RefSeq" id="WP_003096684.1">
    <property type="nucleotide sequence ID" value="NC_009656.1"/>
</dbReference>
<dbReference type="SMR" id="A6VEI5"/>
<dbReference type="GeneID" id="77223910"/>
<dbReference type="KEGG" id="pap:PSPA7_6159"/>
<dbReference type="HOGENOM" id="CLU_069356_15_4_6"/>
<dbReference type="UniPathway" id="UPA00529"/>
<dbReference type="Proteomes" id="UP000001582">
    <property type="component" value="Chromosome"/>
</dbReference>
<dbReference type="GO" id="GO:0003700">
    <property type="term" value="F:DNA-binding transcription factor activity"/>
    <property type="evidence" value="ECO:0007669"/>
    <property type="project" value="UniProtKB-UniRule"/>
</dbReference>
<dbReference type="GO" id="GO:0000976">
    <property type="term" value="F:transcription cis-regulatory region binding"/>
    <property type="evidence" value="ECO:0007669"/>
    <property type="project" value="TreeGrafter"/>
</dbReference>
<dbReference type="GO" id="GO:0019285">
    <property type="term" value="P:glycine betaine biosynthetic process from choline"/>
    <property type="evidence" value="ECO:0007669"/>
    <property type="project" value="UniProtKB-UniRule"/>
</dbReference>
<dbReference type="GO" id="GO:0045892">
    <property type="term" value="P:negative regulation of DNA-templated transcription"/>
    <property type="evidence" value="ECO:0007669"/>
    <property type="project" value="UniProtKB-UniRule"/>
</dbReference>
<dbReference type="Gene3D" id="1.10.357.10">
    <property type="entry name" value="Tetracycline Repressor, domain 2"/>
    <property type="match status" value="1"/>
</dbReference>
<dbReference type="HAMAP" id="MF_00768">
    <property type="entry name" value="HTH_type_BetI"/>
    <property type="match status" value="1"/>
</dbReference>
<dbReference type="InterPro" id="IPR039538">
    <property type="entry name" value="BetI_C"/>
</dbReference>
<dbReference type="InterPro" id="IPR023772">
    <property type="entry name" value="DNA-bd_HTH_TetR-type_CS"/>
</dbReference>
<dbReference type="InterPro" id="IPR009057">
    <property type="entry name" value="Homeodomain-like_sf"/>
</dbReference>
<dbReference type="InterPro" id="IPR050109">
    <property type="entry name" value="HTH-type_TetR-like_transc_reg"/>
</dbReference>
<dbReference type="InterPro" id="IPR001647">
    <property type="entry name" value="HTH_TetR"/>
</dbReference>
<dbReference type="InterPro" id="IPR036271">
    <property type="entry name" value="Tet_transcr_reg_TetR-rel_C_sf"/>
</dbReference>
<dbReference type="InterPro" id="IPR017757">
    <property type="entry name" value="Tscrpt_rep_BetI"/>
</dbReference>
<dbReference type="NCBIfam" id="TIGR03384">
    <property type="entry name" value="betaine_BetI"/>
    <property type="match status" value="1"/>
</dbReference>
<dbReference type="NCBIfam" id="NF001978">
    <property type="entry name" value="PRK00767.1"/>
    <property type="match status" value="1"/>
</dbReference>
<dbReference type="PANTHER" id="PTHR30055:SF234">
    <property type="entry name" value="HTH-TYPE TRANSCRIPTIONAL REGULATOR BETI"/>
    <property type="match status" value="1"/>
</dbReference>
<dbReference type="PANTHER" id="PTHR30055">
    <property type="entry name" value="HTH-TYPE TRANSCRIPTIONAL REGULATOR RUTR"/>
    <property type="match status" value="1"/>
</dbReference>
<dbReference type="Pfam" id="PF13977">
    <property type="entry name" value="TetR_C_6"/>
    <property type="match status" value="1"/>
</dbReference>
<dbReference type="Pfam" id="PF00440">
    <property type="entry name" value="TetR_N"/>
    <property type="match status" value="1"/>
</dbReference>
<dbReference type="SUPFAM" id="SSF46689">
    <property type="entry name" value="Homeodomain-like"/>
    <property type="match status" value="1"/>
</dbReference>
<dbReference type="SUPFAM" id="SSF48498">
    <property type="entry name" value="Tetracyclin repressor-like, C-terminal domain"/>
    <property type="match status" value="1"/>
</dbReference>
<dbReference type="PROSITE" id="PS01081">
    <property type="entry name" value="HTH_TETR_1"/>
    <property type="match status" value="1"/>
</dbReference>
<dbReference type="PROSITE" id="PS50977">
    <property type="entry name" value="HTH_TETR_2"/>
    <property type="match status" value="1"/>
</dbReference>
<keyword id="KW-0238">DNA-binding</keyword>
<keyword id="KW-0678">Repressor</keyword>
<keyword id="KW-0804">Transcription</keyword>
<keyword id="KW-0805">Transcription regulation</keyword>
<gene>
    <name evidence="2" type="primary">betI</name>
    <name type="ordered locus">PSPA7_6159</name>
</gene>
<sequence>MPKVGMQPIRRSQLIHATLEAVDQVGMGDASIALIARLAGVSNGIISHYFQDKNGLLEATMRHLLSALSKAVRERRAALYDDSPRAHLRAIVEGNFDDSQVNGPAMKTWLAFWATSMHQPALRRLQRVNDHRLYSNLCYQFRRQLSADDARAAARGLAALIDGLWLRGALTGDAFDTDEALNIAYDYLDQQLAKQSG</sequence>
<protein>
    <recommendedName>
        <fullName evidence="2">HTH-type transcriptional regulator BetI</fullName>
    </recommendedName>
</protein>
<accession>A6VEI5</accession>
<evidence type="ECO:0000250" key="1"/>
<evidence type="ECO:0000255" key="2">
    <source>
        <dbReference type="HAMAP-Rule" id="MF_00768"/>
    </source>
</evidence>
<proteinExistence type="inferred from homology"/>
<feature type="chain" id="PRO_1000083565" description="HTH-type transcriptional regulator BetI">
    <location>
        <begin position="1"/>
        <end position="197"/>
    </location>
</feature>
<feature type="domain" description="HTH tetR-type" evidence="2">
    <location>
        <begin position="8"/>
        <end position="68"/>
    </location>
</feature>
<feature type="DNA-binding region" description="H-T-H motif" evidence="2">
    <location>
        <begin position="31"/>
        <end position="50"/>
    </location>
</feature>